<reference key="1">
    <citation type="journal article" date="2012" name="BMC Microbiol.">
        <title>Genome sequence of Desulfitobacterium hafniense DCB-2, a Gram-positive anaerobe capable of dehalogenation and metal reduction.</title>
        <authorList>
            <person name="Kim S.H."/>
            <person name="Harzman C."/>
            <person name="Davis J.K."/>
            <person name="Hutcheson R."/>
            <person name="Broderick J.B."/>
            <person name="Marsh T.L."/>
            <person name="Tiedje J.M."/>
        </authorList>
    </citation>
    <scope>NUCLEOTIDE SEQUENCE [LARGE SCALE GENOMIC DNA]</scope>
    <source>
        <strain>DSM 10664 / DCB-2</strain>
    </source>
</reference>
<feature type="chain" id="PRO_1000134440" description="Large ribosomal subunit protein bL34">
    <location>
        <begin position="1"/>
        <end position="44"/>
    </location>
</feature>
<feature type="region of interest" description="Disordered" evidence="2">
    <location>
        <begin position="1"/>
        <end position="44"/>
    </location>
</feature>
<feature type="compositionally biased region" description="Basic residues" evidence="2">
    <location>
        <begin position="1"/>
        <end position="16"/>
    </location>
</feature>
<feature type="compositionally biased region" description="Basic residues" evidence="2">
    <location>
        <begin position="30"/>
        <end position="44"/>
    </location>
</feature>
<evidence type="ECO:0000255" key="1">
    <source>
        <dbReference type="HAMAP-Rule" id="MF_00391"/>
    </source>
</evidence>
<evidence type="ECO:0000256" key="2">
    <source>
        <dbReference type="SAM" id="MobiDB-lite"/>
    </source>
</evidence>
<evidence type="ECO:0000305" key="3"/>
<name>RL34_DESHD</name>
<organism>
    <name type="scientific">Desulfitobacterium hafniense (strain DSM 10664 / DCB-2)</name>
    <dbReference type="NCBI Taxonomy" id="272564"/>
    <lineage>
        <taxon>Bacteria</taxon>
        <taxon>Bacillati</taxon>
        <taxon>Bacillota</taxon>
        <taxon>Clostridia</taxon>
        <taxon>Eubacteriales</taxon>
        <taxon>Desulfitobacteriaceae</taxon>
        <taxon>Desulfitobacterium</taxon>
    </lineage>
</organism>
<gene>
    <name evidence="1" type="primary">rpmH</name>
    <name type="ordered locus">Dhaf_4961</name>
</gene>
<comment type="similarity">
    <text evidence="1">Belongs to the bacterial ribosomal protein bL34 family.</text>
</comment>
<proteinExistence type="inferred from homology"/>
<keyword id="KW-0687">Ribonucleoprotein</keyword>
<keyword id="KW-0689">Ribosomal protein</keyword>
<protein>
    <recommendedName>
        <fullName evidence="1">Large ribosomal subunit protein bL34</fullName>
    </recommendedName>
    <alternativeName>
        <fullName evidence="3">50S ribosomal protein L34</fullName>
    </alternativeName>
</protein>
<sequence length="44" mass="5350">MKRTYQPKNRRHKRVHGFLERMSSTSGRNVLKRRRLKGRKKLSA</sequence>
<dbReference type="EMBL" id="CP001336">
    <property type="protein sequence ID" value="ACL22953.1"/>
    <property type="molecule type" value="Genomic_DNA"/>
</dbReference>
<dbReference type="RefSeq" id="WP_011462335.1">
    <property type="nucleotide sequence ID" value="NC_011830.1"/>
</dbReference>
<dbReference type="SMR" id="B8G0L7"/>
<dbReference type="KEGG" id="dhd:Dhaf_4961"/>
<dbReference type="HOGENOM" id="CLU_129938_2_0_9"/>
<dbReference type="Proteomes" id="UP000007726">
    <property type="component" value="Chromosome"/>
</dbReference>
<dbReference type="GO" id="GO:1990904">
    <property type="term" value="C:ribonucleoprotein complex"/>
    <property type="evidence" value="ECO:0007669"/>
    <property type="project" value="UniProtKB-KW"/>
</dbReference>
<dbReference type="GO" id="GO:0005840">
    <property type="term" value="C:ribosome"/>
    <property type="evidence" value="ECO:0007669"/>
    <property type="project" value="UniProtKB-KW"/>
</dbReference>
<dbReference type="GO" id="GO:0003735">
    <property type="term" value="F:structural constituent of ribosome"/>
    <property type="evidence" value="ECO:0007669"/>
    <property type="project" value="InterPro"/>
</dbReference>
<dbReference type="GO" id="GO:0006412">
    <property type="term" value="P:translation"/>
    <property type="evidence" value="ECO:0007669"/>
    <property type="project" value="UniProtKB-UniRule"/>
</dbReference>
<dbReference type="FunFam" id="1.10.287.3980:FF:000001">
    <property type="entry name" value="Mitochondrial ribosomal protein L34"/>
    <property type="match status" value="1"/>
</dbReference>
<dbReference type="Gene3D" id="1.10.287.3980">
    <property type="match status" value="1"/>
</dbReference>
<dbReference type="HAMAP" id="MF_00391">
    <property type="entry name" value="Ribosomal_bL34"/>
    <property type="match status" value="1"/>
</dbReference>
<dbReference type="InterPro" id="IPR000271">
    <property type="entry name" value="Ribosomal_bL34"/>
</dbReference>
<dbReference type="InterPro" id="IPR020939">
    <property type="entry name" value="Ribosomal_bL34_CS"/>
</dbReference>
<dbReference type="NCBIfam" id="TIGR01030">
    <property type="entry name" value="rpmH_bact"/>
    <property type="match status" value="1"/>
</dbReference>
<dbReference type="PANTHER" id="PTHR14503:SF4">
    <property type="entry name" value="LARGE RIBOSOMAL SUBUNIT PROTEIN BL34M"/>
    <property type="match status" value="1"/>
</dbReference>
<dbReference type="PANTHER" id="PTHR14503">
    <property type="entry name" value="MITOCHONDRIAL RIBOSOMAL PROTEIN 34 FAMILY MEMBER"/>
    <property type="match status" value="1"/>
</dbReference>
<dbReference type="Pfam" id="PF00468">
    <property type="entry name" value="Ribosomal_L34"/>
    <property type="match status" value="1"/>
</dbReference>
<dbReference type="PROSITE" id="PS00784">
    <property type="entry name" value="RIBOSOMAL_L34"/>
    <property type="match status" value="1"/>
</dbReference>
<accession>B8G0L7</accession>